<proteinExistence type="evidence at transcript level"/>
<gene>
    <name type="primary">FABP-1</name>
</gene>
<organism>
    <name type="scientific">Fasciola gigantica</name>
    <name type="common">Giant liver fluke</name>
    <dbReference type="NCBI Taxonomy" id="46835"/>
    <lineage>
        <taxon>Eukaryota</taxon>
        <taxon>Metazoa</taxon>
        <taxon>Spiralia</taxon>
        <taxon>Lophotrochozoa</taxon>
        <taxon>Platyhelminthes</taxon>
        <taxon>Trematoda</taxon>
        <taxon>Digenea</taxon>
        <taxon>Plagiorchiida</taxon>
        <taxon>Echinostomata</taxon>
        <taxon>Echinostomatoidea</taxon>
        <taxon>Fasciolidae</taxon>
        <taxon>Fasciola</taxon>
    </lineage>
</organism>
<name>FABP1_FASGI</name>
<dbReference type="EMBL" id="AF112568">
    <property type="protein sequence ID" value="AAD23998.1"/>
    <property type="molecule type" value="mRNA"/>
</dbReference>
<dbReference type="SMR" id="Q9UAS2"/>
<dbReference type="GO" id="GO:0008289">
    <property type="term" value="F:lipid binding"/>
    <property type="evidence" value="ECO:0007669"/>
    <property type="project" value="UniProtKB-KW"/>
</dbReference>
<dbReference type="CDD" id="cd00742">
    <property type="entry name" value="FABP"/>
    <property type="match status" value="1"/>
</dbReference>
<dbReference type="Gene3D" id="2.40.128.20">
    <property type="match status" value="1"/>
</dbReference>
<dbReference type="InterPro" id="IPR012674">
    <property type="entry name" value="Calycin"/>
</dbReference>
<dbReference type="InterPro" id="IPR000463">
    <property type="entry name" value="Fatty_acid-bd"/>
</dbReference>
<dbReference type="InterPro" id="IPR031259">
    <property type="entry name" value="ILBP"/>
</dbReference>
<dbReference type="InterPro" id="IPR000566">
    <property type="entry name" value="Lipocln_cytosolic_FA-bd_dom"/>
</dbReference>
<dbReference type="PANTHER" id="PTHR11955">
    <property type="entry name" value="FATTY ACID BINDING PROTEIN"/>
    <property type="match status" value="1"/>
</dbReference>
<dbReference type="Pfam" id="PF00061">
    <property type="entry name" value="Lipocalin"/>
    <property type="match status" value="1"/>
</dbReference>
<dbReference type="PRINTS" id="PR00178">
    <property type="entry name" value="FATTYACIDBP"/>
</dbReference>
<dbReference type="SUPFAM" id="SSF50814">
    <property type="entry name" value="Lipocalins"/>
    <property type="match status" value="1"/>
</dbReference>
<reference key="1">
    <citation type="submission" date="1998-12" db="EMBL/GenBank/DDBJ databases">
        <title>Molecular cloning of expressed antigens from Fasciola gigantica.</title>
        <authorList>
            <person name="Grams S.V."/>
            <person name="Grams R."/>
            <person name="Sobhon P."/>
            <person name="Viyanant V."/>
            <person name="Upatham E.S."/>
        </authorList>
    </citation>
    <scope>NUCLEOTIDE SEQUENCE [MRNA]</scope>
    <source>
        <strain>Thailand</strain>
    </source>
</reference>
<keyword id="KW-0007">Acetylation</keyword>
<keyword id="KW-0446">Lipid-binding</keyword>
<keyword id="KW-0813">Transport</keyword>
<accession>Q9UAS2</accession>
<protein>
    <recommendedName>
        <fullName>Fatty acid-binding protein 1</fullName>
    </recommendedName>
</protein>
<feature type="initiator methionine" description="Removed" evidence="1">
    <location>
        <position position="1"/>
    </location>
</feature>
<feature type="chain" id="PRO_0000067353" description="Fatty acid-binding protein 1">
    <location>
        <begin position="2"/>
        <end position="132"/>
    </location>
</feature>
<feature type="modified residue" description="N-acetylalanine" evidence="1">
    <location>
        <position position="2"/>
    </location>
</feature>
<comment type="similarity">
    <text evidence="2">Belongs to the calycin superfamily. Fatty-acid binding protein (FABP) family.</text>
</comment>
<evidence type="ECO:0000250" key="1"/>
<evidence type="ECO:0000305" key="2"/>
<sequence>MADFVGSWKYGDSENMEAYLKKLGISSDMVDKILNAKPEFTFTLEGNQMTIKMVSSLKTKITTFTFGEEFKEETADGKTAMTTVTKDSESKMTQVTTGPEYTTHVVREVVGDKMIATWTVGDVKAVTTLLKA</sequence>